<reference key="1">
    <citation type="journal article" date="2007" name="Science">
        <title>Sea anemone genome reveals ancestral eumetazoan gene repertoire and genomic organization.</title>
        <authorList>
            <person name="Putnam N.H."/>
            <person name="Srivastava M."/>
            <person name="Hellsten U."/>
            <person name="Dirks B."/>
            <person name="Chapman J."/>
            <person name="Salamov A."/>
            <person name="Terry A."/>
            <person name="Shapiro H."/>
            <person name="Lindquist E."/>
            <person name="Kapitonov V.V."/>
            <person name="Jurka J."/>
            <person name="Genikhovich G."/>
            <person name="Grigoriev I.V."/>
            <person name="Lucas S.M."/>
            <person name="Steele R.E."/>
            <person name="Finnerty J.R."/>
            <person name="Technau U."/>
            <person name="Martindale M.Q."/>
            <person name="Rokhsar D.S."/>
        </authorList>
    </citation>
    <scope>NUCLEOTIDE SEQUENCE [LARGE SCALE GENOMIC DNA]</scope>
    <source>
        <strain>CH2 X CH6</strain>
    </source>
</reference>
<dbReference type="EC" id="6.5.1.8" evidence="1"/>
<dbReference type="EMBL" id="DS469515">
    <property type="protein sequence ID" value="EDO48160.1"/>
    <property type="molecule type" value="Genomic_DNA"/>
</dbReference>
<dbReference type="RefSeq" id="XP_001640223.1">
    <property type="nucleotide sequence ID" value="XM_001640173.1"/>
</dbReference>
<dbReference type="SMR" id="A7RKF6"/>
<dbReference type="FunCoup" id="A7RKF6">
    <property type="interactions" value="552"/>
</dbReference>
<dbReference type="STRING" id="45351.A7RKF6"/>
<dbReference type="EnsemblMetazoa" id="EDO48160">
    <property type="protein sequence ID" value="EDO48160"/>
    <property type="gene ID" value="NEMVEDRAFT_v1g198406"/>
</dbReference>
<dbReference type="KEGG" id="nve:5520396"/>
<dbReference type="eggNOG" id="KOG3833">
    <property type="taxonomic scope" value="Eukaryota"/>
</dbReference>
<dbReference type="HOGENOM" id="CLU_022279_0_0_1"/>
<dbReference type="InParanoid" id="A7RKF6"/>
<dbReference type="OMA" id="QTRGVEC"/>
<dbReference type="OrthoDB" id="10249697at2759"/>
<dbReference type="PhylomeDB" id="A7RKF6"/>
<dbReference type="Proteomes" id="UP000001593">
    <property type="component" value="Unassembled WGS sequence"/>
</dbReference>
<dbReference type="GO" id="GO:0005634">
    <property type="term" value="C:nucleus"/>
    <property type="evidence" value="ECO:0000318"/>
    <property type="project" value="GO_Central"/>
</dbReference>
<dbReference type="GO" id="GO:0072669">
    <property type="term" value="C:tRNA-splicing ligase complex"/>
    <property type="evidence" value="ECO:0000318"/>
    <property type="project" value="GO_Central"/>
</dbReference>
<dbReference type="GO" id="GO:0005525">
    <property type="term" value="F:GTP binding"/>
    <property type="evidence" value="ECO:0007669"/>
    <property type="project" value="UniProtKB-KW"/>
</dbReference>
<dbReference type="GO" id="GO:0046872">
    <property type="term" value="F:metal ion binding"/>
    <property type="evidence" value="ECO:0007669"/>
    <property type="project" value="UniProtKB-KW"/>
</dbReference>
<dbReference type="GO" id="GO:0170057">
    <property type="term" value="F:RNA ligase (GTP) activity"/>
    <property type="evidence" value="ECO:0007669"/>
    <property type="project" value="UniProtKB-EC"/>
</dbReference>
<dbReference type="GO" id="GO:0006388">
    <property type="term" value="P:tRNA splicing, via endonucleolytic cleavage and ligation"/>
    <property type="evidence" value="ECO:0000318"/>
    <property type="project" value="GO_Central"/>
</dbReference>
<dbReference type="FunFam" id="3.90.1860.10:FF:000001">
    <property type="entry name" value="tRNA-splicing ligase RtcB homolog"/>
    <property type="match status" value="1"/>
</dbReference>
<dbReference type="Gene3D" id="3.90.1860.10">
    <property type="entry name" value="tRNA-splicing ligase RtcB"/>
    <property type="match status" value="1"/>
</dbReference>
<dbReference type="HAMAP" id="MF_03144">
    <property type="entry name" value="RtcB_euk"/>
    <property type="match status" value="1"/>
</dbReference>
<dbReference type="InterPro" id="IPR001233">
    <property type="entry name" value="RtcB"/>
</dbReference>
<dbReference type="InterPro" id="IPR036025">
    <property type="entry name" value="RtcB-like_sf"/>
</dbReference>
<dbReference type="InterPro" id="IPR027513">
    <property type="entry name" value="RtcB_euk"/>
</dbReference>
<dbReference type="PANTHER" id="PTHR11118">
    <property type="entry name" value="RNA-SPLICING LIGASE RTCB HOMOLOG"/>
    <property type="match status" value="1"/>
</dbReference>
<dbReference type="PANTHER" id="PTHR11118:SF1">
    <property type="entry name" value="RNA-SPLICING LIGASE RTCB HOMOLOG"/>
    <property type="match status" value="1"/>
</dbReference>
<dbReference type="Pfam" id="PF01139">
    <property type="entry name" value="RtcB"/>
    <property type="match status" value="1"/>
</dbReference>
<dbReference type="SUPFAM" id="SSF103365">
    <property type="entry name" value="Hypothetical protein PH1602"/>
    <property type="match status" value="1"/>
</dbReference>
<dbReference type="PROSITE" id="PS01288">
    <property type="entry name" value="UPF0027"/>
    <property type="match status" value="1"/>
</dbReference>
<organism>
    <name type="scientific">Nematostella vectensis</name>
    <name type="common">Starlet sea anemone</name>
    <dbReference type="NCBI Taxonomy" id="45351"/>
    <lineage>
        <taxon>Eukaryota</taxon>
        <taxon>Metazoa</taxon>
        <taxon>Cnidaria</taxon>
        <taxon>Anthozoa</taxon>
        <taxon>Hexacorallia</taxon>
        <taxon>Actiniaria</taxon>
        <taxon>Edwardsiidae</taxon>
        <taxon>Nematostella</taxon>
    </lineage>
</organism>
<name>RTCB_NEMVE</name>
<feature type="chain" id="PRO_0000407227" description="RNA-splicing ligase RtcB homolog">
    <location>
        <begin position="1"/>
        <end position="505"/>
    </location>
</feature>
<feature type="active site" description="GMP-histidine intermediate" evidence="1">
    <location>
        <position position="428"/>
    </location>
</feature>
<feature type="binding site" evidence="1">
    <location>
        <position position="119"/>
    </location>
    <ligand>
        <name>Mn(2+)</name>
        <dbReference type="ChEBI" id="CHEBI:29035"/>
        <label>1</label>
    </ligand>
</feature>
<feature type="binding site" evidence="1">
    <location>
        <position position="122"/>
    </location>
    <ligand>
        <name>Mn(2+)</name>
        <dbReference type="ChEBI" id="CHEBI:29035"/>
        <label>1</label>
    </ligand>
</feature>
<feature type="binding site" evidence="1">
    <location>
        <position position="122"/>
    </location>
    <ligand>
        <name>Mn(2+)</name>
        <dbReference type="ChEBI" id="CHEBI:29035"/>
        <label>2</label>
    </ligand>
</feature>
<feature type="binding site" evidence="1">
    <location>
        <begin position="226"/>
        <end position="230"/>
    </location>
    <ligand>
        <name>GMP</name>
        <dbReference type="ChEBI" id="CHEBI:58115"/>
    </ligand>
</feature>
<feature type="binding site" evidence="1">
    <location>
        <position position="227"/>
    </location>
    <ligand>
        <name>Mn(2+)</name>
        <dbReference type="ChEBI" id="CHEBI:29035"/>
        <label>1</label>
    </ligand>
</feature>
<feature type="binding site" evidence="1">
    <location>
        <position position="259"/>
    </location>
    <ligand>
        <name>Mn(2+)</name>
        <dbReference type="ChEBI" id="CHEBI:29035"/>
        <label>2</label>
    </ligand>
</feature>
<feature type="binding site" evidence="1">
    <location>
        <begin position="353"/>
        <end position="354"/>
    </location>
    <ligand>
        <name>GMP</name>
        <dbReference type="ChEBI" id="CHEBI:58115"/>
    </ligand>
</feature>
<feature type="binding site" evidence="1">
    <location>
        <position position="353"/>
    </location>
    <ligand>
        <name>Mn(2+)</name>
        <dbReference type="ChEBI" id="CHEBI:29035"/>
        <label>2</label>
    </ligand>
</feature>
<feature type="binding site" evidence="1">
    <location>
        <begin position="402"/>
        <end position="405"/>
    </location>
    <ligand>
        <name>GMP</name>
        <dbReference type="ChEBI" id="CHEBI:58115"/>
    </ligand>
</feature>
<feature type="binding site" evidence="1">
    <location>
        <position position="409"/>
    </location>
    <ligand>
        <name>GMP</name>
        <dbReference type="ChEBI" id="CHEBI:58115"/>
    </ligand>
</feature>
<feature type="binding site" evidence="1">
    <location>
        <begin position="428"/>
        <end position="431"/>
    </location>
    <ligand>
        <name>GMP</name>
        <dbReference type="ChEBI" id="CHEBI:58115"/>
    </ligand>
</feature>
<feature type="binding site" evidence="1">
    <location>
        <position position="504"/>
    </location>
    <ligand>
        <name>GMP</name>
        <dbReference type="ChEBI" id="CHEBI:58115"/>
    </ligand>
</feature>
<protein>
    <recommendedName>
        <fullName evidence="1">RNA-splicing ligase RtcB homolog</fullName>
        <ecNumber evidence="1">6.5.1.8</ecNumber>
    </recommendedName>
    <alternativeName>
        <fullName evidence="1">3'-phosphate/5'-hydroxy nucleic acid ligase</fullName>
    </alternativeName>
</protein>
<proteinExistence type="inferred from homology"/>
<sequence>MPRSYKEECSFLERLSDSAFLIKKGFVPNMKVEGKFYINEHLEKLMFDELRHWCGAQGIGGFLPGVKQIANVAALPGIVGYSVGLPDVHSGYGFAIGNMAAFDMSLPEAVVSPGGVGFDINCGVRLLRTNLEEKDVQPVKERLAQSLFDHIPVGVGSKGVIPMGAKDLEDALEMGVDWSLREGYAWAEDKEHCEEYGRMLQADSAKVSAKAKKRGLPQLGTLGAGNHYAEIQVVDEIYNEFAAKKMGIDHKGQVCVMIHSGSRGLGHQVATDALVAMEKAMKRDKIEVNDRQLACAHIKSPEGQDYLKGMAGAANYAWVNRSSMTFLTRQAFAKVFNSTPDDLDMHLIYDVSHNIAKVEEHFLDGRQRQLLVHRKGSTRAFPPHHPLIPVDYQLTGQPVLIGGTMGTCSYVLTGTEKGMTETFGTTCHGAGRALSRAKSRRNLDYQDVLENLAQKGISIRVASPKLVMEEAPESYKNVTDVVDTCHSAGISKKAIKLRPIAVIKG</sequence>
<accession>A7RKF6</accession>
<evidence type="ECO:0000255" key="1">
    <source>
        <dbReference type="HAMAP-Rule" id="MF_03144"/>
    </source>
</evidence>
<comment type="function">
    <text evidence="1">Catalytic subunit of the tRNA-splicing ligase complex that acts by directly joining spliced tRNA halves to mature-sized tRNAs by incorporating the precursor-derived splice junction phosphate into the mature tRNA as a canonical 3',5'-phosphodiester. May act as an RNA ligase with broad substrate specificity, and may function toward other RNAs.</text>
</comment>
<comment type="catalytic activity">
    <reaction evidence="1">
        <text>a 3'-end 3'-phospho-ribonucleotide-RNA + a 5'-end dephospho-ribonucleoside-RNA + GTP = a ribonucleotidyl-ribonucleotide-RNA + GMP + diphosphate</text>
        <dbReference type="Rhea" id="RHEA:68076"/>
        <dbReference type="Rhea" id="RHEA-COMP:10463"/>
        <dbReference type="Rhea" id="RHEA-COMP:13936"/>
        <dbReference type="Rhea" id="RHEA-COMP:17355"/>
        <dbReference type="ChEBI" id="CHEBI:33019"/>
        <dbReference type="ChEBI" id="CHEBI:37565"/>
        <dbReference type="ChEBI" id="CHEBI:58115"/>
        <dbReference type="ChEBI" id="CHEBI:83062"/>
        <dbReference type="ChEBI" id="CHEBI:138284"/>
        <dbReference type="ChEBI" id="CHEBI:173118"/>
        <dbReference type="EC" id="6.5.1.8"/>
    </reaction>
</comment>
<comment type="catalytic activity">
    <reaction evidence="1">
        <text>a 3'-end 2',3'-cyclophospho-ribonucleotide-RNA + a 5'-end dephospho-ribonucleoside-RNA + GTP + H2O = a ribonucleotidyl-ribonucleotide-RNA + GMP + diphosphate + H(+)</text>
        <dbReference type="Rhea" id="RHEA:68080"/>
        <dbReference type="Rhea" id="RHEA-COMP:10464"/>
        <dbReference type="Rhea" id="RHEA-COMP:13936"/>
        <dbReference type="Rhea" id="RHEA-COMP:17355"/>
        <dbReference type="ChEBI" id="CHEBI:15377"/>
        <dbReference type="ChEBI" id="CHEBI:15378"/>
        <dbReference type="ChEBI" id="CHEBI:33019"/>
        <dbReference type="ChEBI" id="CHEBI:37565"/>
        <dbReference type="ChEBI" id="CHEBI:58115"/>
        <dbReference type="ChEBI" id="CHEBI:83064"/>
        <dbReference type="ChEBI" id="CHEBI:138284"/>
        <dbReference type="ChEBI" id="CHEBI:173118"/>
        <dbReference type="EC" id="6.5.1.8"/>
    </reaction>
</comment>
<comment type="cofactor">
    <cofactor evidence="1">
        <name>Mn(2+)</name>
        <dbReference type="ChEBI" id="CHEBI:29035"/>
    </cofactor>
    <text evidence="1">Binds 2 manganese ions per subunit.</text>
</comment>
<comment type="subunit">
    <text evidence="1">Catalytic component of the tRNA-splicing ligase complex.</text>
</comment>
<comment type="miscellaneous">
    <text evidence="1">Ligation probably proceeds through 3 nucleotidyl transfer steps, with 2',3'-cyclic phosphate termini being hydrolyzed to 3'-P termini in a step that precedes 3'-P activation with GMP. In the first nucleotidyl transfer step, RTCB reacts with GTP to form a covalent RTCB-histidine-GMP intermediate with release of PPi; in the second step, the GMP moiety is transferred to the RNA 3'-P; in the third step, the 5'-OH from the opposite RNA strand attacks the activated 3'-P to form a 3',5'-phosphodiester bond and release GMP.</text>
</comment>
<comment type="similarity">
    <text evidence="1">Belongs to the RtcB family.</text>
</comment>
<keyword id="KW-0342">GTP-binding</keyword>
<keyword id="KW-0436">Ligase</keyword>
<keyword id="KW-0464">Manganese</keyword>
<keyword id="KW-0479">Metal-binding</keyword>
<keyword id="KW-0547">Nucleotide-binding</keyword>
<keyword id="KW-1185">Reference proteome</keyword>
<keyword id="KW-0819">tRNA processing</keyword>
<gene>
    <name type="ORF">v1g198406</name>
</gene>